<feature type="chain" id="PRO_0000219254" description="Tetraspanin-9">
    <location>
        <begin position="1"/>
        <end position="239"/>
    </location>
</feature>
<feature type="topological domain" description="Cytoplasmic" evidence="1">
    <location>
        <begin position="1"/>
        <end position="13"/>
    </location>
</feature>
<feature type="transmembrane region" description="Helical" evidence="1">
    <location>
        <begin position="14"/>
        <end position="34"/>
    </location>
</feature>
<feature type="topological domain" description="Extracellular" evidence="1">
    <location>
        <begin position="35"/>
        <end position="55"/>
    </location>
</feature>
<feature type="transmembrane region" description="Helical" evidence="1">
    <location>
        <begin position="56"/>
        <end position="76"/>
    </location>
</feature>
<feature type="topological domain" description="Cytoplasmic" evidence="1">
    <location>
        <begin position="77"/>
        <end position="85"/>
    </location>
</feature>
<feature type="transmembrane region" description="Helical" evidence="1">
    <location>
        <begin position="86"/>
        <end position="106"/>
    </location>
</feature>
<feature type="topological domain" description="Extracellular" evidence="1">
    <location>
        <begin position="107"/>
        <end position="203"/>
    </location>
</feature>
<feature type="transmembrane region" description="Helical" evidence="1">
    <location>
        <begin position="204"/>
        <end position="224"/>
    </location>
</feature>
<feature type="topological domain" description="Cytoplasmic" evidence="1">
    <location>
        <begin position="225"/>
        <end position="239"/>
    </location>
</feature>
<feature type="glycosylation site" description="N-linked (GlcNAc...) asparagine" evidence="2">
    <location>
        <position position="180"/>
    </location>
</feature>
<comment type="subunit">
    <text evidence="2">Found in a complex with GP6.</text>
</comment>
<comment type="subcellular location">
    <subcellularLocation>
        <location evidence="4">Membrane</location>
        <topology evidence="4">Multi-pass membrane protein</topology>
    </subcellularLocation>
    <text>Colocalizes with GP6 in tetraspanin microdomains on the platelet surface.</text>
</comment>
<comment type="tissue specificity">
    <text evidence="2">Strongly expressed in megakaryocytes, platelets and lung. Weakly expressed in bone marrow, brain and kidney (at protein level).</text>
</comment>
<comment type="PTM">
    <text evidence="2">Glycosylated.</text>
</comment>
<comment type="similarity">
    <text evidence="3">Belongs to the tetraspanin (TM4SF) family.</text>
</comment>
<sequence length="239" mass="26738">MARGCLCCLKYTMFLFNLIFWLCGCGLLGVGIWLSVSQGNFATFSPSFPSLSAANLVIAIGTIVMVTGFLGCLGAIKENKCLLLSFFIVLLIILLAELILIILFFVYMDKVNENAKQDLKEGLLLYNTENNVGLKNAWNIIQAEMRCCGVTDYTDWYPVLGENTVPDRCCMENSQGCGRNSTTPLWRTGCYEKVKLWFDDNKHVLGTVGMCILIMQILGMAFSMTLFQHIHRTGKKYDA</sequence>
<gene>
    <name type="primary">Tspan9</name>
    <name type="synonym">Net5</name>
</gene>
<keyword id="KW-0325">Glycoprotein</keyword>
<keyword id="KW-0472">Membrane</keyword>
<keyword id="KW-1185">Reference proteome</keyword>
<keyword id="KW-0812">Transmembrane</keyword>
<keyword id="KW-1133">Transmembrane helix</keyword>
<name>TSN9_MOUSE</name>
<evidence type="ECO:0000255" key="1"/>
<evidence type="ECO:0000269" key="2">
    <source>
    </source>
</evidence>
<evidence type="ECO:0000305" key="3"/>
<evidence type="ECO:0000305" key="4">
    <source>
    </source>
</evidence>
<proteinExistence type="evidence at protein level"/>
<protein>
    <recommendedName>
        <fullName>Tetraspanin-9</fullName>
        <shortName>Tspan-9</shortName>
    </recommendedName>
    <alternativeName>
        <fullName>Tetraspan NET-5</fullName>
    </alternativeName>
</protein>
<reference key="1">
    <citation type="journal article" date="2005" name="Science">
        <title>The transcriptional landscape of the mammalian genome.</title>
        <authorList>
            <person name="Carninci P."/>
            <person name="Kasukawa T."/>
            <person name="Katayama S."/>
            <person name="Gough J."/>
            <person name="Frith M.C."/>
            <person name="Maeda N."/>
            <person name="Oyama R."/>
            <person name="Ravasi T."/>
            <person name="Lenhard B."/>
            <person name="Wells C."/>
            <person name="Kodzius R."/>
            <person name="Shimokawa K."/>
            <person name="Bajic V.B."/>
            <person name="Brenner S.E."/>
            <person name="Batalov S."/>
            <person name="Forrest A.R."/>
            <person name="Zavolan M."/>
            <person name="Davis M.J."/>
            <person name="Wilming L.G."/>
            <person name="Aidinis V."/>
            <person name="Allen J.E."/>
            <person name="Ambesi-Impiombato A."/>
            <person name="Apweiler R."/>
            <person name="Aturaliya R.N."/>
            <person name="Bailey T.L."/>
            <person name="Bansal M."/>
            <person name="Baxter L."/>
            <person name="Beisel K.W."/>
            <person name="Bersano T."/>
            <person name="Bono H."/>
            <person name="Chalk A.M."/>
            <person name="Chiu K.P."/>
            <person name="Choudhary V."/>
            <person name="Christoffels A."/>
            <person name="Clutterbuck D.R."/>
            <person name="Crowe M.L."/>
            <person name="Dalla E."/>
            <person name="Dalrymple B.P."/>
            <person name="de Bono B."/>
            <person name="Della Gatta G."/>
            <person name="di Bernardo D."/>
            <person name="Down T."/>
            <person name="Engstrom P."/>
            <person name="Fagiolini M."/>
            <person name="Faulkner G."/>
            <person name="Fletcher C.F."/>
            <person name="Fukushima T."/>
            <person name="Furuno M."/>
            <person name="Futaki S."/>
            <person name="Gariboldi M."/>
            <person name="Georgii-Hemming P."/>
            <person name="Gingeras T.R."/>
            <person name="Gojobori T."/>
            <person name="Green R.E."/>
            <person name="Gustincich S."/>
            <person name="Harbers M."/>
            <person name="Hayashi Y."/>
            <person name="Hensch T.K."/>
            <person name="Hirokawa N."/>
            <person name="Hill D."/>
            <person name="Huminiecki L."/>
            <person name="Iacono M."/>
            <person name="Ikeo K."/>
            <person name="Iwama A."/>
            <person name="Ishikawa T."/>
            <person name="Jakt M."/>
            <person name="Kanapin A."/>
            <person name="Katoh M."/>
            <person name="Kawasawa Y."/>
            <person name="Kelso J."/>
            <person name="Kitamura H."/>
            <person name="Kitano H."/>
            <person name="Kollias G."/>
            <person name="Krishnan S.P."/>
            <person name="Kruger A."/>
            <person name="Kummerfeld S.K."/>
            <person name="Kurochkin I.V."/>
            <person name="Lareau L.F."/>
            <person name="Lazarevic D."/>
            <person name="Lipovich L."/>
            <person name="Liu J."/>
            <person name="Liuni S."/>
            <person name="McWilliam S."/>
            <person name="Madan Babu M."/>
            <person name="Madera M."/>
            <person name="Marchionni L."/>
            <person name="Matsuda H."/>
            <person name="Matsuzawa S."/>
            <person name="Miki H."/>
            <person name="Mignone F."/>
            <person name="Miyake S."/>
            <person name="Morris K."/>
            <person name="Mottagui-Tabar S."/>
            <person name="Mulder N."/>
            <person name="Nakano N."/>
            <person name="Nakauchi H."/>
            <person name="Ng P."/>
            <person name="Nilsson R."/>
            <person name="Nishiguchi S."/>
            <person name="Nishikawa S."/>
            <person name="Nori F."/>
            <person name="Ohara O."/>
            <person name="Okazaki Y."/>
            <person name="Orlando V."/>
            <person name="Pang K.C."/>
            <person name="Pavan W.J."/>
            <person name="Pavesi G."/>
            <person name="Pesole G."/>
            <person name="Petrovsky N."/>
            <person name="Piazza S."/>
            <person name="Reed J."/>
            <person name="Reid J.F."/>
            <person name="Ring B.Z."/>
            <person name="Ringwald M."/>
            <person name="Rost B."/>
            <person name="Ruan Y."/>
            <person name="Salzberg S.L."/>
            <person name="Sandelin A."/>
            <person name="Schneider C."/>
            <person name="Schoenbach C."/>
            <person name="Sekiguchi K."/>
            <person name="Semple C.A."/>
            <person name="Seno S."/>
            <person name="Sessa L."/>
            <person name="Sheng Y."/>
            <person name="Shibata Y."/>
            <person name="Shimada H."/>
            <person name="Shimada K."/>
            <person name="Silva D."/>
            <person name="Sinclair B."/>
            <person name="Sperling S."/>
            <person name="Stupka E."/>
            <person name="Sugiura K."/>
            <person name="Sultana R."/>
            <person name="Takenaka Y."/>
            <person name="Taki K."/>
            <person name="Tammoja K."/>
            <person name="Tan S.L."/>
            <person name="Tang S."/>
            <person name="Taylor M.S."/>
            <person name="Tegner J."/>
            <person name="Teichmann S.A."/>
            <person name="Ueda H.R."/>
            <person name="van Nimwegen E."/>
            <person name="Verardo R."/>
            <person name="Wei C.L."/>
            <person name="Yagi K."/>
            <person name="Yamanishi H."/>
            <person name="Zabarovsky E."/>
            <person name="Zhu S."/>
            <person name="Zimmer A."/>
            <person name="Hide W."/>
            <person name="Bult C."/>
            <person name="Grimmond S.M."/>
            <person name="Teasdale R.D."/>
            <person name="Liu E.T."/>
            <person name="Brusic V."/>
            <person name="Quackenbush J."/>
            <person name="Wahlestedt C."/>
            <person name="Mattick J.S."/>
            <person name="Hume D.A."/>
            <person name="Kai C."/>
            <person name="Sasaki D."/>
            <person name="Tomaru Y."/>
            <person name="Fukuda S."/>
            <person name="Kanamori-Katayama M."/>
            <person name="Suzuki M."/>
            <person name="Aoki J."/>
            <person name="Arakawa T."/>
            <person name="Iida J."/>
            <person name="Imamura K."/>
            <person name="Itoh M."/>
            <person name="Kato T."/>
            <person name="Kawaji H."/>
            <person name="Kawagashira N."/>
            <person name="Kawashima T."/>
            <person name="Kojima M."/>
            <person name="Kondo S."/>
            <person name="Konno H."/>
            <person name="Nakano K."/>
            <person name="Ninomiya N."/>
            <person name="Nishio T."/>
            <person name="Okada M."/>
            <person name="Plessy C."/>
            <person name="Shibata K."/>
            <person name="Shiraki T."/>
            <person name="Suzuki S."/>
            <person name="Tagami M."/>
            <person name="Waki K."/>
            <person name="Watahiki A."/>
            <person name="Okamura-Oho Y."/>
            <person name="Suzuki H."/>
            <person name="Kawai J."/>
            <person name="Hayashizaki Y."/>
        </authorList>
    </citation>
    <scope>NUCLEOTIDE SEQUENCE [LARGE SCALE MRNA]</scope>
    <source>
        <strain>C57BL/6J</strain>
        <tissue>Embryo</tissue>
        <tissue>Visual cortex</tissue>
    </source>
</reference>
<reference key="2">
    <citation type="journal article" date="2004" name="Genome Res.">
        <title>The status, quality, and expansion of the NIH full-length cDNA project: the Mammalian Gene Collection (MGC).</title>
        <authorList>
            <consortium name="The MGC Project Team"/>
        </authorList>
    </citation>
    <scope>NUCLEOTIDE SEQUENCE [LARGE SCALE MRNA]</scope>
    <source>
        <strain>Czech II</strain>
        <tissue>Lung</tissue>
    </source>
</reference>
<reference key="3">
    <citation type="journal article" date="2009" name="Biochem. J.">
        <title>Identification of Tspan9 as a novel platelet tetraspanin and the collagen receptor GPVI as a component of tetraspanin microdomains.</title>
        <authorList>
            <person name="Protty M.B."/>
            <person name="Watkins N.A."/>
            <person name="Colombo D."/>
            <person name="Thomas S.G."/>
            <person name="Heath V.L."/>
            <person name="Herbert J.M."/>
            <person name="Bicknell R."/>
            <person name="Senis Y.A."/>
            <person name="Ashman L.K."/>
            <person name="Berditchevski F."/>
            <person name="Ouwehand W.H."/>
            <person name="Watson S.P."/>
            <person name="Tomlinson M.G."/>
        </authorList>
    </citation>
    <scope>IDENTIFICATION IN A COMPLEX WITH GP6</scope>
    <scope>SUBCELLULAR LOCATION</scope>
    <scope>GLYCOSYLATION</scope>
    <scope>TISSUE SPECIFICITY</scope>
</reference>
<reference key="4">
    <citation type="journal article" date="2010" name="Cell">
        <title>A tissue-specific atlas of mouse protein phosphorylation and expression.</title>
        <authorList>
            <person name="Huttlin E.L."/>
            <person name="Jedrychowski M.P."/>
            <person name="Elias J.E."/>
            <person name="Goswami T."/>
            <person name="Rad R."/>
            <person name="Beausoleil S.A."/>
            <person name="Villen J."/>
            <person name="Haas W."/>
            <person name="Sowa M.E."/>
            <person name="Gygi S.P."/>
        </authorList>
    </citation>
    <scope>IDENTIFICATION BY MASS SPECTROMETRY [LARGE SCALE ANALYSIS]</scope>
    <source>
        <tissue>Heart</tissue>
        <tissue>Kidney</tissue>
        <tissue>Liver</tissue>
        <tissue>Lung</tissue>
        <tissue>Spleen</tissue>
    </source>
</reference>
<accession>Q8BJU2</accession>
<accession>Q3TQQ0</accession>
<organism>
    <name type="scientific">Mus musculus</name>
    <name type="common">Mouse</name>
    <dbReference type="NCBI Taxonomy" id="10090"/>
    <lineage>
        <taxon>Eukaryota</taxon>
        <taxon>Metazoa</taxon>
        <taxon>Chordata</taxon>
        <taxon>Craniata</taxon>
        <taxon>Vertebrata</taxon>
        <taxon>Euteleostomi</taxon>
        <taxon>Mammalia</taxon>
        <taxon>Eutheria</taxon>
        <taxon>Euarchontoglires</taxon>
        <taxon>Glires</taxon>
        <taxon>Rodentia</taxon>
        <taxon>Myomorpha</taxon>
        <taxon>Muroidea</taxon>
        <taxon>Muridae</taxon>
        <taxon>Murinae</taxon>
        <taxon>Mus</taxon>
        <taxon>Mus</taxon>
    </lineage>
</organism>
<dbReference type="EMBL" id="AK079139">
    <property type="protein sequence ID" value="BAC37559.1"/>
    <property type="molecule type" value="mRNA"/>
</dbReference>
<dbReference type="EMBL" id="AK158729">
    <property type="protein sequence ID" value="BAE34632.1"/>
    <property type="molecule type" value="mRNA"/>
</dbReference>
<dbReference type="EMBL" id="AK163395">
    <property type="protein sequence ID" value="BAE37332.1"/>
    <property type="molecule type" value="mRNA"/>
</dbReference>
<dbReference type="EMBL" id="BC052503">
    <property type="protein sequence ID" value="AAH52503.1"/>
    <property type="molecule type" value="mRNA"/>
</dbReference>
<dbReference type="CCDS" id="CCDS20568.1"/>
<dbReference type="RefSeq" id="NP_001343230.1">
    <property type="nucleotide sequence ID" value="NM_001356301.2"/>
</dbReference>
<dbReference type="RefSeq" id="NP_001366062.1">
    <property type="nucleotide sequence ID" value="NM_001379133.1"/>
</dbReference>
<dbReference type="RefSeq" id="NP_001366063.1">
    <property type="nucleotide sequence ID" value="NM_001379134.1"/>
</dbReference>
<dbReference type="RefSeq" id="NP_001366064.1">
    <property type="nucleotide sequence ID" value="NM_001379135.1"/>
</dbReference>
<dbReference type="RefSeq" id="NP_780623.1">
    <property type="nucleotide sequence ID" value="NM_175414.6"/>
</dbReference>
<dbReference type="RefSeq" id="XP_006505396.1">
    <property type="nucleotide sequence ID" value="XM_006505333.3"/>
</dbReference>
<dbReference type="RefSeq" id="XP_006505398.1">
    <property type="nucleotide sequence ID" value="XM_006505335.2"/>
</dbReference>
<dbReference type="SMR" id="Q8BJU2"/>
<dbReference type="BioGRID" id="224615">
    <property type="interactions" value="1"/>
</dbReference>
<dbReference type="FunCoup" id="Q8BJU2">
    <property type="interactions" value="210"/>
</dbReference>
<dbReference type="STRING" id="10090.ENSMUSP00000107796"/>
<dbReference type="GlyCosmos" id="Q8BJU2">
    <property type="glycosylation" value="1 site, No reported glycans"/>
</dbReference>
<dbReference type="GlyGen" id="Q8BJU2">
    <property type="glycosylation" value="1 site, 1 N-linked glycan (1 site)"/>
</dbReference>
<dbReference type="iPTMnet" id="Q8BJU2"/>
<dbReference type="PhosphoSitePlus" id="Q8BJU2"/>
<dbReference type="SwissPalm" id="Q8BJU2"/>
<dbReference type="jPOST" id="Q8BJU2"/>
<dbReference type="PaxDb" id="10090-ENSMUSP00000107794"/>
<dbReference type="PeptideAtlas" id="Q8BJU2"/>
<dbReference type="ProteomicsDB" id="297666"/>
<dbReference type="Pumba" id="Q8BJU2"/>
<dbReference type="Antibodypedia" id="2820">
    <property type="antibodies" value="154 antibodies from 32 providers"/>
</dbReference>
<dbReference type="DNASU" id="109246"/>
<dbReference type="Ensembl" id="ENSMUST00000032503.12">
    <property type="protein sequence ID" value="ENSMUSP00000032503.6"/>
    <property type="gene ID" value="ENSMUSG00000030352.16"/>
</dbReference>
<dbReference type="Ensembl" id="ENSMUST00000112171.8">
    <property type="protein sequence ID" value="ENSMUSP00000107794.2"/>
    <property type="gene ID" value="ENSMUSG00000030352.16"/>
</dbReference>
<dbReference type="Ensembl" id="ENSMUST00000112173.8">
    <property type="protein sequence ID" value="ENSMUSP00000107796.2"/>
    <property type="gene ID" value="ENSMUSG00000030352.16"/>
</dbReference>
<dbReference type="GeneID" id="109246"/>
<dbReference type="KEGG" id="mmu:109246"/>
<dbReference type="UCSC" id="uc009eco.1">
    <property type="organism name" value="mouse"/>
</dbReference>
<dbReference type="AGR" id="MGI:1924558"/>
<dbReference type="CTD" id="10867"/>
<dbReference type="MGI" id="MGI:1924558">
    <property type="gene designation" value="Tspan9"/>
</dbReference>
<dbReference type="VEuPathDB" id="HostDB:ENSMUSG00000030352"/>
<dbReference type="eggNOG" id="KOG3882">
    <property type="taxonomic scope" value="Eukaryota"/>
</dbReference>
<dbReference type="GeneTree" id="ENSGT00940000158225"/>
<dbReference type="HOGENOM" id="CLU_055524_4_3_1"/>
<dbReference type="InParanoid" id="Q8BJU2"/>
<dbReference type="OMA" id="DTIFMCI"/>
<dbReference type="PhylomeDB" id="Q8BJU2"/>
<dbReference type="TreeFam" id="TF352892"/>
<dbReference type="BioGRID-ORCS" id="109246">
    <property type="hits" value="3 hits in 79 CRISPR screens"/>
</dbReference>
<dbReference type="ChiTaRS" id="Tspan9">
    <property type="organism name" value="mouse"/>
</dbReference>
<dbReference type="PRO" id="PR:Q8BJU2"/>
<dbReference type="Proteomes" id="UP000000589">
    <property type="component" value="Chromosome 6"/>
</dbReference>
<dbReference type="RNAct" id="Q8BJU2">
    <property type="molecule type" value="protein"/>
</dbReference>
<dbReference type="Bgee" id="ENSMUSG00000030352">
    <property type="expression patterns" value="Expressed in gastrula and 269 other cell types or tissues"/>
</dbReference>
<dbReference type="ExpressionAtlas" id="Q8BJU2">
    <property type="expression patterns" value="baseline and differential"/>
</dbReference>
<dbReference type="GO" id="GO:0016020">
    <property type="term" value="C:membrane"/>
    <property type="evidence" value="ECO:0000314"/>
    <property type="project" value="UniProtKB"/>
</dbReference>
<dbReference type="GO" id="GO:0140494">
    <property type="term" value="C:migrasome"/>
    <property type="evidence" value="ECO:0000314"/>
    <property type="project" value="MGI"/>
</dbReference>
<dbReference type="GO" id="GO:0097197">
    <property type="term" value="C:tetraspanin-enriched microdomain"/>
    <property type="evidence" value="ECO:0007669"/>
    <property type="project" value="Ensembl"/>
</dbReference>
<dbReference type="GO" id="GO:0005102">
    <property type="term" value="F:signaling receptor binding"/>
    <property type="evidence" value="ECO:0000266"/>
    <property type="project" value="MGI"/>
</dbReference>
<dbReference type="GO" id="GO:0038063">
    <property type="term" value="P:collagen-activated tyrosine kinase receptor signaling pathway"/>
    <property type="evidence" value="ECO:0000315"/>
    <property type="project" value="MGI"/>
</dbReference>
<dbReference type="GO" id="GO:0160040">
    <property type="term" value="P:mitocytosis"/>
    <property type="evidence" value="ECO:0000314"/>
    <property type="project" value="MGI"/>
</dbReference>
<dbReference type="GO" id="GO:0001780">
    <property type="term" value="P:neutrophil homeostasis"/>
    <property type="evidence" value="ECO:0000315"/>
    <property type="project" value="MGI"/>
</dbReference>
<dbReference type="GO" id="GO:0070527">
    <property type="term" value="P:platelet aggregation"/>
    <property type="evidence" value="ECO:0000315"/>
    <property type="project" value="MGI"/>
</dbReference>
<dbReference type="GO" id="GO:0098953">
    <property type="term" value="P:receptor diffusion trapping"/>
    <property type="evidence" value="ECO:0000315"/>
    <property type="project" value="MGI"/>
</dbReference>
<dbReference type="GO" id="GO:0051881">
    <property type="term" value="P:regulation of mitochondrial membrane potential"/>
    <property type="evidence" value="ECO:0000314"/>
    <property type="project" value="MGI"/>
</dbReference>
<dbReference type="CDD" id="cd03165">
    <property type="entry name" value="NET-5_like_LEL"/>
    <property type="match status" value="1"/>
</dbReference>
<dbReference type="FunFam" id="1.10.1450.10:FF:000008">
    <property type="entry name" value="Tetraspanin"/>
    <property type="match status" value="1"/>
</dbReference>
<dbReference type="Gene3D" id="1.10.1450.10">
    <property type="entry name" value="Tetraspanin"/>
    <property type="match status" value="1"/>
</dbReference>
<dbReference type="InterPro" id="IPR018499">
    <property type="entry name" value="Tetraspanin/Peripherin"/>
</dbReference>
<dbReference type="InterPro" id="IPR000301">
    <property type="entry name" value="Tetraspanin_animals"/>
</dbReference>
<dbReference type="InterPro" id="IPR018503">
    <property type="entry name" value="Tetraspanin_CS"/>
</dbReference>
<dbReference type="InterPro" id="IPR008952">
    <property type="entry name" value="Tetraspanin_EC2_sf"/>
</dbReference>
<dbReference type="PANTHER" id="PTHR19282">
    <property type="entry name" value="TETRASPANIN"/>
    <property type="match status" value="1"/>
</dbReference>
<dbReference type="PANTHER" id="PTHR19282:SF41">
    <property type="entry name" value="TETRASPANIN-9"/>
    <property type="match status" value="1"/>
</dbReference>
<dbReference type="Pfam" id="PF00335">
    <property type="entry name" value="Tetraspanin"/>
    <property type="match status" value="1"/>
</dbReference>
<dbReference type="PIRSF" id="PIRSF002419">
    <property type="entry name" value="Tetraspanin"/>
    <property type="match status" value="1"/>
</dbReference>
<dbReference type="PRINTS" id="PR00259">
    <property type="entry name" value="TMFOUR"/>
</dbReference>
<dbReference type="SUPFAM" id="SSF48652">
    <property type="entry name" value="Tetraspanin"/>
    <property type="match status" value="1"/>
</dbReference>
<dbReference type="PROSITE" id="PS00421">
    <property type="entry name" value="TM4_1"/>
    <property type="match status" value="1"/>
</dbReference>